<organism>
    <name type="scientific">Escherichia coli O8 (strain IAI1)</name>
    <dbReference type="NCBI Taxonomy" id="585034"/>
    <lineage>
        <taxon>Bacteria</taxon>
        <taxon>Pseudomonadati</taxon>
        <taxon>Pseudomonadota</taxon>
        <taxon>Gammaproteobacteria</taxon>
        <taxon>Enterobacterales</taxon>
        <taxon>Enterobacteriaceae</taxon>
        <taxon>Escherichia</taxon>
    </lineage>
</organism>
<reference key="1">
    <citation type="journal article" date="2009" name="PLoS Genet.">
        <title>Organised genome dynamics in the Escherichia coli species results in highly diverse adaptive paths.</title>
        <authorList>
            <person name="Touchon M."/>
            <person name="Hoede C."/>
            <person name="Tenaillon O."/>
            <person name="Barbe V."/>
            <person name="Baeriswyl S."/>
            <person name="Bidet P."/>
            <person name="Bingen E."/>
            <person name="Bonacorsi S."/>
            <person name="Bouchier C."/>
            <person name="Bouvet O."/>
            <person name="Calteau A."/>
            <person name="Chiapello H."/>
            <person name="Clermont O."/>
            <person name="Cruveiller S."/>
            <person name="Danchin A."/>
            <person name="Diard M."/>
            <person name="Dossat C."/>
            <person name="Karoui M.E."/>
            <person name="Frapy E."/>
            <person name="Garry L."/>
            <person name="Ghigo J.M."/>
            <person name="Gilles A.M."/>
            <person name="Johnson J."/>
            <person name="Le Bouguenec C."/>
            <person name="Lescat M."/>
            <person name="Mangenot S."/>
            <person name="Martinez-Jehanne V."/>
            <person name="Matic I."/>
            <person name="Nassif X."/>
            <person name="Oztas S."/>
            <person name="Petit M.A."/>
            <person name="Pichon C."/>
            <person name="Rouy Z."/>
            <person name="Ruf C.S."/>
            <person name="Schneider D."/>
            <person name="Tourret J."/>
            <person name="Vacherie B."/>
            <person name="Vallenet D."/>
            <person name="Medigue C."/>
            <person name="Rocha E.P.C."/>
            <person name="Denamur E."/>
        </authorList>
    </citation>
    <scope>NUCLEOTIDE SEQUENCE [LARGE SCALE GENOMIC DNA]</scope>
    <source>
        <strain>IAI1</strain>
    </source>
</reference>
<keyword id="KW-0963">Cytoplasm</keyword>
<keyword id="KW-0804">Transcription</keyword>
<keyword id="KW-0805">Transcription regulation</keyword>
<name>RSD_ECO8A</name>
<protein>
    <recommendedName>
        <fullName evidence="1">Regulator of sigma D</fullName>
    </recommendedName>
</protein>
<gene>
    <name evidence="1" type="primary">rsd</name>
    <name type="ordered locus">ECIAI1_4210</name>
</gene>
<sequence length="158" mass="18243">MLNQLDNLTERVRGSNKLVDRWLHVRKHLLVAYYNLVGIKPGKESYMRLNEKALDDFCQSLVDYLSAGHFSIYERILHKLEGNGQLARAAKIWPQLEANTQQIMDYYDSSLETAIDHDNYLEFQQVLSDIGEALEARFVLEDKLILLVLDAARVKHPA</sequence>
<accession>B7M7Q4</accession>
<proteinExistence type="inferred from homology"/>
<feature type="chain" id="PRO_1000138191" description="Regulator of sigma D">
    <location>
        <begin position="1"/>
        <end position="158"/>
    </location>
</feature>
<evidence type="ECO:0000255" key="1">
    <source>
        <dbReference type="HAMAP-Rule" id="MF_01181"/>
    </source>
</evidence>
<dbReference type="EMBL" id="CU928160">
    <property type="protein sequence ID" value="CAR00969.1"/>
    <property type="molecule type" value="Genomic_DNA"/>
</dbReference>
<dbReference type="RefSeq" id="WP_000934302.1">
    <property type="nucleotide sequence ID" value="NC_011741.1"/>
</dbReference>
<dbReference type="SMR" id="B7M7Q4"/>
<dbReference type="GeneID" id="75205513"/>
<dbReference type="KEGG" id="ecr:ECIAI1_4210"/>
<dbReference type="HOGENOM" id="CLU_142729_0_0_6"/>
<dbReference type="GO" id="GO:0005737">
    <property type="term" value="C:cytoplasm"/>
    <property type="evidence" value="ECO:0007669"/>
    <property type="project" value="UniProtKB-SubCell"/>
</dbReference>
<dbReference type="GO" id="GO:0006355">
    <property type="term" value="P:regulation of DNA-templated transcription"/>
    <property type="evidence" value="ECO:0007669"/>
    <property type="project" value="InterPro"/>
</dbReference>
<dbReference type="FunFam" id="1.20.120.1370:FF:000001">
    <property type="entry name" value="Regulator of sigma D"/>
    <property type="match status" value="1"/>
</dbReference>
<dbReference type="Gene3D" id="1.20.120.1370">
    <property type="entry name" value="Regulator of RNA polymerase sigma(70) subunit, domain 4"/>
    <property type="match status" value="1"/>
</dbReference>
<dbReference type="HAMAP" id="MF_01181">
    <property type="entry name" value="Rsd"/>
    <property type="match status" value="1"/>
</dbReference>
<dbReference type="InterPro" id="IPR038309">
    <property type="entry name" value="Rsd/AlgQ_sf"/>
</dbReference>
<dbReference type="InterPro" id="IPR023785">
    <property type="entry name" value="Sigma70_reg_Rsd"/>
</dbReference>
<dbReference type="InterPro" id="IPR007448">
    <property type="entry name" value="Sigma70_reg_Rsd_AlgQ"/>
</dbReference>
<dbReference type="NCBIfam" id="NF008723">
    <property type="entry name" value="PRK11718.1"/>
    <property type="match status" value="1"/>
</dbReference>
<dbReference type="Pfam" id="PF04353">
    <property type="entry name" value="Rsd_AlgQ"/>
    <property type="match status" value="1"/>
</dbReference>
<dbReference type="PIRSF" id="PIRSF016548">
    <property type="entry name" value="Rsd_AlgQ"/>
    <property type="match status" value="1"/>
</dbReference>
<comment type="function">
    <text evidence="1">Binds RpoD and negatively regulates RpoD-mediated transcription activation by preventing the interaction between the primary sigma factor RpoD with the catalytic core of the RNA polymerase and with promoter DNA. May be involved in replacement of the RNA polymerase sigma subunit from RpoD to RpoS during the transition from exponential growth to the stationary phase.</text>
</comment>
<comment type="subunit">
    <text evidence="1">Interacts with RpoD.</text>
</comment>
<comment type="subcellular location">
    <subcellularLocation>
        <location evidence="1">Cytoplasm</location>
    </subcellularLocation>
</comment>
<comment type="similarity">
    <text evidence="1">Belongs to the Rsd/AlgQ family.</text>
</comment>